<keyword id="KW-0167">Capsid protein</keyword>
<keyword id="KW-1176">Cytoplasmic inwards viral transport</keyword>
<keyword id="KW-1015">Disulfide bond</keyword>
<keyword id="KW-0238">DNA-binding</keyword>
<keyword id="KW-1039">Host endosome</keyword>
<keyword id="KW-1040">Host Golgi apparatus</keyword>
<keyword id="KW-1048">Host nucleus</keyword>
<keyword id="KW-0945">Host-virus interaction</keyword>
<keyword id="KW-0426">Late protein</keyword>
<keyword id="KW-1177">Microtubular inwards viral transport</keyword>
<keyword id="KW-0597">Phosphoprotein</keyword>
<keyword id="KW-1163">Viral penetration into host nucleus</keyword>
<keyword id="KW-0946">Virion</keyword>
<keyword id="KW-1160">Virus entry into host cell</keyword>
<dbReference type="EMBL" id="X74462">
    <property type="protein sequence ID" value="CAA52473.1"/>
    <property type="molecule type" value="Genomic_DNA"/>
</dbReference>
<dbReference type="PIR" id="S36553">
    <property type="entry name" value="S36553"/>
</dbReference>
<dbReference type="Proteomes" id="UP000007706">
    <property type="component" value="Genome"/>
</dbReference>
<dbReference type="GO" id="GO:0043657">
    <property type="term" value="C:host cell"/>
    <property type="evidence" value="ECO:0007669"/>
    <property type="project" value="GOC"/>
</dbReference>
<dbReference type="GO" id="GO:0044174">
    <property type="term" value="C:host cell endosome"/>
    <property type="evidence" value="ECO:0007669"/>
    <property type="project" value="UniProtKB-KW"/>
</dbReference>
<dbReference type="GO" id="GO:0044177">
    <property type="term" value="C:host cell Golgi apparatus"/>
    <property type="evidence" value="ECO:0007669"/>
    <property type="project" value="UniProtKB-SubCell"/>
</dbReference>
<dbReference type="GO" id="GO:0042025">
    <property type="term" value="C:host cell nucleus"/>
    <property type="evidence" value="ECO:0007669"/>
    <property type="project" value="UniProtKB-SubCell"/>
</dbReference>
<dbReference type="GO" id="GO:0019028">
    <property type="term" value="C:viral capsid"/>
    <property type="evidence" value="ECO:0007669"/>
    <property type="project" value="UniProtKB-UniRule"/>
</dbReference>
<dbReference type="GO" id="GO:0003677">
    <property type="term" value="F:DNA binding"/>
    <property type="evidence" value="ECO:0007669"/>
    <property type="project" value="UniProtKB-UniRule"/>
</dbReference>
<dbReference type="GO" id="GO:0005198">
    <property type="term" value="F:structural molecule activity"/>
    <property type="evidence" value="ECO:0007669"/>
    <property type="project" value="UniProtKB-UniRule"/>
</dbReference>
<dbReference type="GO" id="GO:0075521">
    <property type="term" value="P:microtubule-dependent intracellular transport of viral material towards nucleus"/>
    <property type="evidence" value="ECO:0007669"/>
    <property type="project" value="UniProtKB-UniRule"/>
</dbReference>
<dbReference type="GO" id="GO:0046718">
    <property type="term" value="P:symbiont entry into host cell"/>
    <property type="evidence" value="ECO:0007669"/>
    <property type="project" value="UniProtKB-KW"/>
</dbReference>
<dbReference type="GO" id="GO:0075732">
    <property type="term" value="P:viral penetration into host nucleus"/>
    <property type="evidence" value="ECO:0007669"/>
    <property type="project" value="UniProtKB-KW"/>
</dbReference>
<dbReference type="HAMAP" id="MF_04003">
    <property type="entry name" value="PPV_L2"/>
    <property type="match status" value="1"/>
</dbReference>
<dbReference type="InterPro" id="IPR000784">
    <property type="entry name" value="Late_L2"/>
</dbReference>
<dbReference type="Pfam" id="PF00513">
    <property type="entry name" value="Late_protein_L2"/>
    <property type="match status" value="1"/>
</dbReference>
<proteinExistence type="inferred from homology"/>
<sequence>MVAHRARRRKRASATQLYRTCKAAGTCPPDVIPKVEGTTLADRILQWGSLGVYLGGLGIGTGSGTGGRTGYAPISTRPGTVVDVSVPAKPPVVIEPVGPSDPSIVNLLEDSSIINSGSTIPTFTGTDGFEVISSATTTPAVLDITPASDNVVVSSTNFSNPAFTEPSLLEVPQNGEVSGHILISTPTSGTHGYEEIPMETFASPGTGTEPISSTPVPGVSRIAGPRLYSKAVTQVKVTDPAFLTRPRSLMTFDNPVFEPEDETIIFERPYSPSQVPDSDFLDILRLHRPALTSRRGTVRYSRVGQKLSMRTRSGKGLGARVHYYQDLSPIGPTEDIEMEPLIAPASASAYDSLYDVYADVDDADIGFTSGGRSDTLSRGRATVSPLSSTLSTKYGNVTIPFVSPVDVPLQPGPDILLPASAQWPFVPLSPVDTTHYVYIDGGDFYLWPVTFFLPRRRRRKRVSYFLADGTVAL</sequence>
<organismHost>
    <name type="scientific">Homo sapiens</name>
    <name type="common">Human</name>
    <dbReference type="NCBI Taxonomy" id="9606"/>
</organismHost>
<evidence type="ECO:0000255" key="1">
    <source>
        <dbReference type="HAMAP-Rule" id="MF_04003"/>
    </source>
</evidence>
<protein>
    <recommendedName>
        <fullName evidence="1">Minor capsid protein L2</fullName>
    </recommendedName>
</protein>
<gene>
    <name evidence="1" type="primary">L2</name>
</gene>
<feature type="chain" id="PRO_0000133568" description="Minor capsid protein L2">
    <location>
        <begin position="1"/>
        <end position="473"/>
    </location>
</feature>
<feature type="short sequence motif" description="Nuclear localization signal" evidence="1">
    <location>
        <begin position="1"/>
        <end position="12"/>
    </location>
</feature>
<feature type="short sequence motif" description="Nuclear localization signal" evidence="1">
    <location>
        <begin position="452"/>
        <end position="462"/>
    </location>
</feature>
<feature type="disulfide bond" evidence="1">
    <location>
        <begin position="21"/>
        <end position="27"/>
    </location>
</feature>
<reference key="1">
    <citation type="journal article" date="1994" name="Curr. Top. Microbiol. Immunol.">
        <title>Primer-directed sequencing of human papillomavirus types.</title>
        <authorList>
            <person name="Delius H."/>
            <person name="Hofmann B."/>
        </authorList>
    </citation>
    <scope>NUCLEOTIDE SEQUENCE [GENOMIC DNA]</scope>
</reference>
<accession>P36744</accession>
<name>VL2_HPV03</name>
<comment type="function">
    <text evidence="1">Minor protein of the capsid that localizes along the inner surface of the virion, within the central cavities beneath the L1 pentamers. Plays a role in capsid stabilization through interaction with the major capsid protein L1. Once the virion enters the host cell, L2 escorts the genomic DNA into the nucleus by promoting escape from the endosomal compartments and traffic through the host Golgi network. Mechanistically, the C-terminus of L2 possesses a cell-penetrating peptide that protudes from the host endosome, interacts with host cytoplasmic retromer cargo and thereby mediates the capsid delivery to the host trans-Golgi network. Plays a role through its interaction with host dynein in the intracellular microtubule-dependent transport of viral capsid toward the nucleus. Mediates the viral genome import into the nucleus through binding to host importins. Once within the nucleus, L2 localizes viral genomes to host PML bodies in order to activate early gene expression for establishment of infection. Later on, promotes late gene expression by interacting with the viral E2 protein and by inhibiting its transcriptional activation functions. During virion assembly, encapsidates the genome by direct interaction with the viral DNA.</text>
</comment>
<comment type="subunit">
    <text evidence="1">Interacts with major capsid protein L1. Interacts with E2; this interaction inhibits E2 transcriptional activity but not the DNA replication function E2. Interacts with host GADD45GIP1. Interacts with host HSPA8; this interaction is required for L2 nuclear translocation. Interacts with host importins KPNB2 and KPNB3. Forms a complex with importin alpha2-beta1 heterodimers via interaction with the importin alpha2 adapter. Interacts with host DYNLT1; this interaction is essential for virus intracellular transport during entry. Interacts (via C-terminus) with host retromer subunits VPS35 and VPS29.</text>
</comment>
<comment type="subcellular location">
    <subcellularLocation>
        <location evidence="1">Virion</location>
    </subcellularLocation>
    <subcellularLocation>
        <location evidence="1">Host nucleus</location>
    </subcellularLocation>
    <subcellularLocation>
        <location evidence="1">Host early endosome</location>
    </subcellularLocation>
    <subcellularLocation>
        <location evidence="1">Host Golgi apparatus</location>
    </subcellularLocation>
</comment>
<comment type="PTM">
    <text evidence="1">Highly phosphorylated.</text>
</comment>
<comment type="similarity">
    <text evidence="1">Belongs to the papillomaviridae L2 protein family.</text>
</comment>
<organism>
    <name type="scientific">Human papillomavirus 3</name>
    <dbReference type="NCBI Taxonomy" id="10614"/>
    <lineage>
        <taxon>Viruses</taxon>
        <taxon>Monodnaviria</taxon>
        <taxon>Shotokuvirae</taxon>
        <taxon>Cossaviricota</taxon>
        <taxon>Papovaviricetes</taxon>
        <taxon>Zurhausenvirales</taxon>
        <taxon>Papillomaviridae</taxon>
        <taxon>Firstpapillomavirinae</taxon>
        <taxon>Alphapapillomavirus</taxon>
        <taxon>Alphapapillomavirus 2</taxon>
    </lineage>
</organism>